<feature type="chain" id="PRO_0000209894" description="Protein-S-isoprenylcysteine O-methyltransferase">
    <location>
        <begin position="1"/>
        <end position="284"/>
    </location>
</feature>
<feature type="topological domain" description="Cytoplasmic" evidence="2">
    <location>
        <begin position="1"/>
        <end position="16"/>
    </location>
</feature>
<feature type="transmembrane region" description="Helical" evidence="2">
    <location>
        <begin position="17"/>
        <end position="33"/>
    </location>
</feature>
<feature type="topological domain" description="Lumenal" evidence="2">
    <location>
        <begin position="34"/>
        <end position="41"/>
    </location>
</feature>
<feature type="transmembrane region" description="Helical" evidence="2">
    <location>
        <begin position="42"/>
        <end position="59"/>
    </location>
</feature>
<feature type="topological domain" description="Cytoplasmic" evidence="2">
    <location>
        <begin position="60"/>
        <end position="69"/>
    </location>
</feature>
<feature type="transmembrane region" description="Helical" evidence="2">
    <location>
        <begin position="70"/>
        <end position="87"/>
    </location>
</feature>
<feature type="topological domain" description="Lumenal" evidence="2">
    <location>
        <begin position="88"/>
        <end position="92"/>
    </location>
</feature>
<feature type="transmembrane region" description="Helical" evidence="2">
    <location>
        <begin position="93"/>
        <end position="112"/>
    </location>
</feature>
<feature type="topological domain" description="Cytoplasmic" evidence="2">
    <location>
        <begin position="113"/>
        <end position="131"/>
    </location>
</feature>
<feature type="transmembrane region" description="Helical" evidence="2">
    <location>
        <begin position="132"/>
        <end position="149"/>
    </location>
</feature>
<feature type="topological domain" description="Lumenal" evidence="2">
    <location>
        <begin position="150"/>
        <end position="154"/>
    </location>
</feature>
<feature type="transmembrane region" description="Helical" evidence="2">
    <location>
        <begin position="155"/>
        <end position="174"/>
    </location>
</feature>
<feature type="topological domain" description="Cytoplasmic" evidence="2">
    <location>
        <begin position="175"/>
        <end position="212"/>
    </location>
</feature>
<feature type="transmembrane region" description="Helical" evidence="2">
    <location>
        <begin position="213"/>
        <end position="228"/>
    </location>
</feature>
<feature type="topological domain" description="Lumenal" evidence="2">
    <location>
        <position position="229"/>
    </location>
</feature>
<feature type="transmembrane region" description="Helical" evidence="2">
    <location>
        <begin position="230"/>
        <end position="244"/>
    </location>
</feature>
<feature type="topological domain" description="Cytoplasmic" evidence="2">
    <location>
        <begin position="245"/>
        <end position="284"/>
    </location>
</feature>
<feature type="binding site" evidence="1">
    <location>
        <position position="190"/>
    </location>
    <ligand>
        <name>S-adenosyl-L-methionine</name>
        <dbReference type="ChEBI" id="CHEBI:59789"/>
    </ligand>
</feature>
<feature type="binding site" evidence="1">
    <location>
        <begin position="197"/>
        <end position="200"/>
    </location>
    <ligand>
        <name>S-adenosyl-L-methionine</name>
        <dbReference type="ChEBI" id="CHEBI:59789"/>
    </ligand>
</feature>
<feature type="binding site" evidence="1">
    <location>
        <position position="205"/>
    </location>
    <ligand>
        <name>S-adenosyl-L-methionine</name>
        <dbReference type="ChEBI" id="CHEBI:59789"/>
    </ligand>
</feature>
<feature type="binding site" evidence="1">
    <location>
        <begin position="210"/>
        <end position="213"/>
    </location>
    <ligand>
        <name>S-adenosyl-L-methionine</name>
        <dbReference type="ChEBI" id="CHEBI:59789"/>
    </ligand>
</feature>
<feature type="binding site" evidence="1">
    <location>
        <position position="247"/>
    </location>
    <ligand>
        <name>substrate</name>
    </ligand>
</feature>
<feature type="binding site" evidence="1">
    <location>
        <position position="251"/>
    </location>
    <ligand>
        <name>S-adenosyl-L-methionine</name>
        <dbReference type="ChEBI" id="CHEBI:59789"/>
    </ligand>
</feature>
<evidence type="ECO:0000250" key="1">
    <source>
        <dbReference type="UniProtKB" id="D6WJ77"/>
    </source>
</evidence>
<evidence type="ECO:0000255" key="2"/>
<evidence type="ECO:0000255" key="3">
    <source>
        <dbReference type="PROSITE-ProRule" id="PRU00897"/>
    </source>
</evidence>
<evidence type="ECO:0000269" key="4">
    <source>
    </source>
</evidence>
<evidence type="ECO:0000269" key="5">
    <source>
    </source>
</evidence>
<evidence type="ECO:0000269" key="6">
    <source>
    </source>
</evidence>
<comment type="function">
    <text evidence="6">Catalyzes the post-translational methylation of isoprenylated C-terminal cysteine residues.</text>
</comment>
<comment type="catalytic activity">
    <reaction evidence="6">
        <text>[protein]-C-terminal S-[(2E,6E)-farnesyl]-L-cysteine + S-adenosyl-L-methionine = [protein]-C-terminal S-[(2E,6E)-farnesyl]-L-cysteine methyl ester + S-adenosyl-L-homocysteine</text>
        <dbReference type="Rhea" id="RHEA:21672"/>
        <dbReference type="Rhea" id="RHEA-COMP:12125"/>
        <dbReference type="Rhea" id="RHEA-COMP:12126"/>
        <dbReference type="ChEBI" id="CHEBI:57856"/>
        <dbReference type="ChEBI" id="CHEBI:59789"/>
        <dbReference type="ChEBI" id="CHEBI:90510"/>
        <dbReference type="ChEBI" id="CHEBI:90511"/>
        <dbReference type="EC" id="2.1.1.100"/>
    </reaction>
</comment>
<comment type="activity regulation">
    <text evidence="6">Competitively inhibited by N-acetyl-S-trans,trans-farnesyl-l-cysteine (AFC).</text>
</comment>
<comment type="interaction">
    <interactant intactId="EBI-11721771">
        <id>O60725</id>
    </interactant>
    <interactant intactId="EBI-13059134">
        <id>Q13520</id>
        <label>AQP6</label>
    </interactant>
    <organismsDiffer>false</organismsDiffer>
    <experiments>3</experiments>
</comment>
<comment type="interaction">
    <interactant intactId="EBI-11721771">
        <id>O60725</id>
    </interactant>
    <interactant intactId="EBI-11343438">
        <id>Q3SXY8</id>
        <label>ARL13B</label>
    </interactant>
    <organismsDiffer>false</organismsDiffer>
    <experiments>3</experiments>
</comment>
<comment type="interaction">
    <interactant intactId="EBI-11721771">
        <id>O60725</id>
    </interactant>
    <interactant intactId="EBI-10266796">
        <id>Q8N5M9</id>
        <label>JAGN1</label>
    </interactant>
    <organismsDiffer>false</organismsDiffer>
    <experiments>3</experiments>
</comment>
<comment type="interaction">
    <interactant intactId="EBI-11721771">
        <id>O60725</id>
    </interactant>
    <interactant intactId="EBI-12017638">
        <id>P48051</id>
        <label>KCNJ6</label>
    </interactant>
    <organismsDiffer>false</organismsDiffer>
    <experiments>3</experiments>
</comment>
<comment type="interaction">
    <interactant intactId="EBI-11721771">
        <id>O60725</id>
    </interactant>
    <interactant intactId="EBI-17263240">
        <id>P15941-11</id>
        <label>MUC1</label>
    </interactant>
    <organismsDiffer>false</organismsDiffer>
    <experiments>3</experiments>
</comment>
<comment type="interaction">
    <interactant intactId="EBI-11721771">
        <id>O60725</id>
    </interactant>
    <interactant intactId="EBI-716063">
        <id>Q13113</id>
        <label>PDZK1IP1</label>
    </interactant>
    <organismsDiffer>false</organismsDiffer>
    <experiments>3</experiments>
</comment>
<comment type="interaction">
    <interactant intactId="EBI-11721771">
        <id>O60725</id>
    </interactant>
    <interactant intactId="EBI-2466594">
        <id>Q6ZMZ0</id>
        <label>RNF19B</label>
    </interactant>
    <organismsDiffer>false</organismsDiffer>
    <experiments>3</experiments>
</comment>
<comment type="interaction">
    <interactant intactId="EBI-11721771">
        <id>O60725</id>
    </interactant>
    <interactant intactId="EBI-742790">
        <id>Q13049</id>
        <label>TRIM32</label>
    </interactant>
    <organismsDiffer>false</organismsDiffer>
    <experiments>3</experiments>
</comment>
<comment type="subcellular location">
    <subcellularLocation>
        <location evidence="5 6">Endoplasmic reticulum membrane</location>
        <topology evidence="5">Multi-pass membrane protein</topology>
    </subcellularLocation>
</comment>
<comment type="tissue specificity">
    <text evidence="4">Ubiquitously expressed. Expressed at higher levels in the cerebellum and putamen than in other brain regions. Abundant expression seen in the Purkinje cells and pontine neurons.</text>
</comment>
<comment type="similarity">
    <text evidence="3">Belongs to the class VI-like SAM-binding methyltransferase superfamily. Isoprenylcysteine carboxyl methyltransferase family.</text>
</comment>
<keyword id="KW-0256">Endoplasmic reticulum</keyword>
<keyword id="KW-0472">Membrane</keyword>
<keyword id="KW-0489">Methyltransferase</keyword>
<keyword id="KW-1267">Proteomics identification</keyword>
<keyword id="KW-1185">Reference proteome</keyword>
<keyword id="KW-0949">S-adenosyl-L-methionine</keyword>
<keyword id="KW-0808">Transferase</keyword>
<keyword id="KW-0812">Transmembrane</keyword>
<keyword id="KW-1133">Transmembrane helix</keyword>
<sequence>MAGCAARAPPGSEARLSLATFLLGASVLALPLLTRAGLQGRTGLALYVAGLNALLLLLYRPPRYQIAIRACFLGFVFGCGTLLSFSQSSWSHFGWYMCSLSLFHYSEYLVTAVNNPKSLSLDSFLLNHSLEYTVAALSSWLEFTLENIFWPELKQITWLSVTGLLMVVFGECLRKAAMFTAGSNFNHVVQNEKSDTHTLVTSGVYAWFRHPSYVGWFYWSIGTQVMLCNPICGVSYALTVWRFFRDRTEEEEISLIHFFGEEYLEYKKRVPTGLPFIKGVKVDL</sequence>
<accession>O60725</accession>
<accession>Q6FHT0</accession>
<organism>
    <name type="scientific">Homo sapiens</name>
    <name type="common">Human</name>
    <dbReference type="NCBI Taxonomy" id="9606"/>
    <lineage>
        <taxon>Eukaryota</taxon>
        <taxon>Metazoa</taxon>
        <taxon>Chordata</taxon>
        <taxon>Craniata</taxon>
        <taxon>Vertebrata</taxon>
        <taxon>Euteleostomi</taxon>
        <taxon>Mammalia</taxon>
        <taxon>Eutheria</taxon>
        <taxon>Euarchontoglires</taxon>
        <taxon>Primates</taxon>
        <taxon>Haplorrhini</taxon>
        <taxon>Catarrhini</taxon>
        <taxon>Hominidae</taxon>
        <taxon>Homo</taxon>
    </lineage>
</organism>
<reference key="1">
    <citation type="journal article" date="1998" name="J. Biol. Chem.">
        <title>Mammalian prenylcysteine carboxyl methyltransferase is in the endoplasmic reticulum.</title>
        <authorList>
            <person name="Dai Q."/>
            <person name="Choy E."/>
            <person name="Chiu V."/>
            <person name="Romano J."/>
            <person name="Slivka S.R."/>
            <person name="Steitz S.A."/>
            <person name="Michaelis S."/>
            <person name="Philips M.R."/>
        </authorList>
    </citation>
    <scope>NUCLEOTIDE SEQUENCE [MRNA]</scope>
    <scope>FUNCTION</scope>
    <scope>CATALYTIC ACTIVITY</scope>
    <scope>ACTIVITY REGULATION</scope>
    <scope>SUBCELLULAR LOCATION</scope>
    <source>
        <tissue>Myeloid</tissue>
    </source>
</reference>
<reference key="2">
    <citation type="submission" date="2004-06" db="EMBL/GenBank/DDBJ databases">
        <title>Cloning of human full open reading frames in Gateway(TM) system entry vector (pDONR201).</title>
        <authorList>
            <person name="Ebert L."/>
            <person name="Schick M."/>
            <person name="Neubert P."/>
            <person name="Schatten R."/>
            <person name="Henze S."/>
            <person name="Korn B."/>
        </authorList>
    </citation>
    <scope>NUCLEOTIDE SEQUENCE [LARGE SCALE MRNA]</scope>
</reference>
<reference key="3">
    <citation type="journal article" date="2006" name="Nature">
        <title>The DNA sequence and biological annotation of human chromosome 1.</title>
        <authorList>
            <person name="Gregory S.G."/>
            <person name="Barlow K.F."/>
            <person name="McLay K.E."/>
            <person name="Kaul R."/>
            <person name="Swarbreck D."/>
            <person name="Dunham A."/>
            <person name="Scott C.E."/>
            <person name="Howe K.L."/>
            <person name="Woodfine K."/>
            <person name="Spencer C.C.A."/>
            <person name="Jones M.C."/>
            <person name="Gillson C."/>
            <person name="Searle S."/>
            <person name="Zhou Y."/>
            <person name="Kokocinski F."/>
            <person name="McDonald L."/>
            <person name="Evans R."/>
            <person name="Phillips K."/>
            <person name="Atkinson A."/>
            <person name="Cooper R."/>
            <person name="Jones C."/>
            <person name="Hall R.E."/>
            <person name="Andrews T.D."/>
            <person name="Lloyd C."/>
            <person name="Ainscough R."/>
            <person name="Almeida J.P."/>
            <person name="Ambrose K.D."/>
            <person name="Anderson F."/>
            <person name="Andrew R.W."/>
            <person name="Ashwell R.I.S."/>
            <person name="Aubin K."/>
            <person name="Babbage A.K."/>
            <person name="Bagguley C.L."/>
            <person name="Bailey J."/>
            <person name="Beasley H."/>
            <person name="Bethel G."/>
            <person name="Bird C.P."/>
            <person name="Bray-Allen S."/>
            <person name="Brown J.Y."/>
            <person name="Brown A.J."/>
            <person name="Buckley D."/>
            <person name="Burton J."/>
            <person name="Bye J."/>
            <person name="Carder C."/>
            <person name="Chapman J.C."/>
            <person name="Clark S.Y."/>
            <person name="Clarke G."/>
            <person name="Clee C."/>
            <person name="Cobley V."/>
            <person name="Collier R.E."/>
            <person name="Corby N."/>
            <person name="Coville G.J."/>
            <person name="Davies J."/>
            <person name="Deadman R."/>
            <person name="Dunn M."/>
            <person name="Earthrowl M."/>
            <person name="Ellington A.G."/>
            <person name="Errington H."/>
            <person name="Frankish A."/>
            <person name="Frankland J."/>
            <person name="French L."/>
            <person name="Garner P."/>
            <person name="Garnett J."/>
            <person name="Gay L."/>
            <person name="Ghori M.R.J."/>
            <person name="Gibson R."/>
            <person name="Gilby L.M."/>
            <person name="Gillett W."/>
            <person name="Glithero R.J."/>
            <person name="Grafham D.V."/>
            <person name="Griffiths C."/>
            <person name="Griffiths-Jones S."/>
            <person name="Grocock R."/>
            <person name="Hammond S."/>
            <person name="Harrison E.S.I."/>
            <person name="Hart E."/>
            <person name="Haugen E."/>
            <person name="Heath P.D."/>
            <person name="Holmes S."/>
            <person name="Holt K."/>
            <person name="Howden P.J."/>
            <person name="Hunt A.R."/>
            <person name="Hunt S.E."/>
            <person name="Hunter G."/>
            <person name="Isherwood J."/>
            <person name="James R."/>
            <person name="Johnson C."/>
            <person name="Johnson D."/>
            <person name="Joy A."/>
            <person name="Kay M."/>
            <person name="Kershaw J.K."/>
            <person name="Kibukawa M."/>
            <person name="Kimberley A.M."/>
            <person name="King A."/>
            <person name="Knights A.J."/>
            <person name="Lad H."/>
            <person name="Laird G."/>
            <person name="Lawlor S."/>
            <person name="Leongamornlert D.A."/>
            <person name="Lloyd D.M."/>
            <person name="Loveland J."/>
            <person name="Lovell J."/>
            <person name="Lush M.J."/>
            <person name="Lyne R."/>
            <person name="Martin S."/>
            <person name="Mashreghi-Mohammadi M."/>
            <person name="Matthews L."/>
            <person name="Matthews N.S.W."/>
            <person name="McLaren S."/>
            <person name="Milne S."/>
            <person name="Mistry S."/>
            <person name="Moore M.J.F."/>
            <person name="Nickerson T."/>
            <person name="O'Dell C.N."/>
            <person name="Oliver K."/>
            <person name="Palmeiri A."/>
            <person name="Palmer S.A."/>
            <person name="Parker A."/>
            <person name="Patel D."/>
            <person name="Pearce A.V."/>
            <person name="Peck A.I."/>
            <person name="Pelan S."/>
            <person name="Phelps K."/>
            <person name="Phillimore B.J."/>
            <person name="Plumb R."/>
            <person name="Rajan J."/>
            <person name="Raymond C."/>
            <person name="Rouse G."/>
            <person name="Saenphimmachak C."/>
            <person name="Sehra H.K."/>
            <person name="Sheridan E."/>
            <person name="Shownkeen R."/>
            <person name="Sims S."/>
            <person name="Skuce C.D."/>
            <person name="Smith M."/>
            <person name="Steward C."/>
            <person name="Subramanian S."/>
            <person name="Sycamore N."/>
            <person name="Tracey A."/>
            <person name="Tromans A."/>
            <person name="Van Helmond Z."/>
            <person name="Wall M."/>
            <person name="Wallis J.M."/>
            <person name="White S."/>
            <person name="Whitehead S.L."/>
            <person name="Wilkinson J.E."/>
            <person name="Willey D.L."/>
            <person name="Williams H."/>
            <person name="Wilming L."/>
            <person name="Wray P.W."/>
            <person name="Wu Z."/>
            <person name="Coulson A."/>
            <person name="Vaudin M."/>
            <person name="Sulston J.E."/>
            <person name="Durbin R.M."/>
            <person name="Hubbard T."/>
            <person name="Wooster R."/>
            <person name="Dunham I."/>
            <person name="Carter N.P."/>
            <person name="McVean G."/>
            <person name="Ross M.T."/>
            <person name="Harrow J."/>
            <person name="Olson M.V."/>
            <person name="Beck S."/>
            <person name="Rogers J."/>
            <person name="Bentley D.R."/>
        </authorList>
    </citation>
    <scope>NUCLEOTIDE SEQUENCE [LARGE SCALE GENOMIC DNA]</scope>
</reference>
<reference key="4">
    <citation type="submission" date="2005-07" db="EMBL/GenBank/DDBJ databases">
        <authorList>
            <person name="Mural R.J."/>
            <person name="Istrail S."/>
            <person name="Sutton G.G."/>
            <person name="Florea L."/>
            <person name="Halpern A.L."/>
            <person name="Mobarry C.M."/>
            <person name="Lippert R."/>
            <person name="Walenz B."/>
            <person name="Shatkay H."/>
            <person name="Dew I."/>
            <person name="Miller J.R."/>
            <person name="Flanigan M.J."/>
            <person name="Edwards N.J."/>
            <person name="Bolanos R."/>
            <person name="Fasulo D."/>
            <person name="Halldorsson B.V."/>
            <person name="Hannenhalli S."/>
            <person name="Turner R."/>
            <person name="Yooseph S."/>
            <person name="Lu F."/>
            <person name="Nusskern D.R."/>
            <person name="Shue B.C."/>
            <person name="Zheng X.H."/>
            <person name="Zhong F."/>
            <person name="Delcher A.L."/>
            <person name="Huson D.H."/>
            <person name="Kravitz S.A."/>
            <person name="Mouchard L."/>
            <person name="Reinert K."/>
            <person name="Remington K.A."/>
            <person name="Clark A.G."/>
            <person name="Waterman M.S."/>
            <person name="Eichler E.E."/>
            <person name="Adams M.D."/>
            <person name="Hunkapiller M.W."/>
            <person name="Myers E.W."/>
            <person name="Venter J.C."/>
        </authorList>
    </citation>
    <scope>NUCLEOTIDE SEQUENCE [LARGE SCALE GENOMIC DNA]</scope>
</reference>
<reference key="5">
    <citation type="journal article" date="2004" name="Genome Res.">
        <title>The status, quality, and expansion of the NIH full-length cDNA project: the Mammalian Gene Collection (MGC).</title>
        <authorList>
            <consortium name="The MGC Project Team"/>
        </authorList>
    </citation>
    <scope>NUCLEOTIDE SEQUENCE [LARGE SCALE MRNA]</scope>
    <source>
        <tissue>Brain</tissue>
    </source>
</reference>
<reference key="6">
    <citation type="journal article" date="2000" name="Nat. Neurosci.">
        <title>Polyglutamine expansion down-regulates specific neuronal genes before pathologic changes in SCA1.</title>
        <authorList>
            <person name="Lin X."/>
            <person name="Antalffy B."/>
            <person name="Kang D."/>
            <person name="Orr H.T."/>
            <person name="Zoghbi H.Y."/>
        </authorList>
    </citation>
    <scope>TISSUE SPECIFICITY</scope>
</reference>
<reference key="7">
    <citation type="journal article" date="2009" name="Mol. Cell. Biol.">
        <title>Topology of mammalian isoprenylcysteine carboxyl methyltransferase determined in live cells with a fluorescent probe.</title>
        <authorList>
            <person name="Wright L.P."/>
            <person name="Court H."/>
            <person name="Mor A."/>
            <person name="Ahearn I.M."/>
            <person name="Casey P.J."/>
            <person name="Philips M.R."/>
        </authorList>
    </citation>
    <scope>SUBCELLULAR LOCATION</scope>
    <scope>MEMBRANE TOPOLOGY</scope>
</reference>
<name>ICMT_HUMAN</name>
<protein>
    <recommendedName>
        <fullName>Protein-S-isoprenylcysteine O-methyltransferase</fullName>
        <ecNumber evidence="6">2.1.1.100</ecNumber>
    </recommendedName>
    <alternativeName>
        <fullName>Isoprenylcysteine carboxylmethyltransferase</fullName>
    </alternativeName>
    <alternativeName>
        <fullName>Prenylated protein carboxyl methyltransferase</fullName>
        <shortName>PPMT</shortName>
    </alternativeName>
    <alternativeName>
        <fullName>Prenylcysteine carboxyl methyltransferase</fullName>
        <shortName>pcCMT</shortName>
    </alternativeName>
</protein>
<dbReference type="EC" id="2.1.1.100" evidence="6"/>
<dbReference type="EMBL" id="AF064084">
    <property type="protein sequence ID" value="AAC16554.1"/>
    <property type="molecule type" value="mRNA"/>
</dbReference>
<dbReference type="EMBL" id="CR541671">
    <property type="protein sequence ID" value="CAG46472.1"/>
    <property type="molecule type" value="mRNA"/>
</dbReference>
<dbReference type="EMBL" id="CR541711">
    <property type="protein sequence ID" value="CAG46512.1"/>
    <property type="molecule type" value="mRNA"/>
</dbReference>
<dbReference type="EMBL" id="AL031847">
    <property type="status" value="NOT_ANNOTATED_CDS"/>
    <property type="molecule type" value="Genomic_DNA"/>
</dbReference>
<dbReference type="EMBL" id="CH471130">
    <property type="protein sequence ID" value="EAW71522.1"/>
    <property type="molecule type" value="Genomic_DNA"/>
</dbReference>
<dbReference type="EMBL" id="BC028168">
    <property type="protein sequence ID" value="AAH28168.1"/>
    <property type="molecule type" value="mRNA"/>
</dbReference>
<dbReference type="CCDS" id="CCDS61.1"/>
<dbReference type="RefSeq" id="NP_036537.1">
    <property type="nucleotide sequence ID" value="NM_012405.4"/>
</dbReference>
<dbReference type="SMR" id="O60725"/>
<dbReference type="BioGRID" id="117026">
    <property type="interactions" value="142"/>
</dbReference>
<dbReference type="FunCoup" id="O60725">
    <property type="interactions" value="709"/>
</dbReference>
<dbReference type="IntAct" id="O60725">
    <property type="interactions" value="38"/>
</dbReference>
<dbReference type="MINT" id="O60725"/>
<dbReference type="STRING" id="9606.ENSP00000343552"/>
<dbReference type="BindingDB" id="O60725"/>
<dbReference type="ChEMBL" id="CHEMBL4699"/>
<dbReference type="iPTMnet" id="O60725"/>
<dbReference type="PhosphoSitePlus" id="O60725"/>
<dbReference type="SwissPalm" id="O60725"/>
<dbReference type="BioMuta" id="ICMT"/>
<dbReference type="jPOST" id="O60725"/>
<dbReference type="MassIVE" id="O60725"/>
<dbReference type="PaxDb" id="9606-ENSP00000343552"/>
<dbReference type="PeptideAtlas" id="O60725"/>
<dbReference type="ProteomicsDB" id="49571"/>
<dbReference type="Pumba" id="O60725"/>
<dbReference type="Antibodypedia" id="27272">
    <property type="antibodies" value="192 antibodies from 26 providers"/>
</dbReference>
<dbReference type="DNASU" id="23463"/>
<dbReference type="Ensembl" id="ENST00000343813.10">
    <property type="protein sequence ID" value="ENSP00000343552.5"/>
    <property type="gene ID" value="ENSG00000116237.16"/>
</dbReference>
<dbReference type="GeneID" id="23463"/>
<dbReference type="KEGG" id="hsa:23463"/>
<dbReference type="MANE-Select" id="ENST00000343813.10">
    <property type="protein sequence ID" value="ENSP00000343552.5"/>
    <property type="RefSeq nucleotide sequence ID" value="NM_012405.4"/>
    <property type="RefSeq protein sequence ID" value="NP_036537.1"/>
</dbReference>
<dbReference type="UCSC" id="uc001amk.4">
    <property type="organism name" value="human"/>
</dbReference>
<dbReference type="AGR" id="HGNC:5350"/>
<dbReference type="CTD" id="23463"/>
<dbReference type="DisGeNET" id="23463"/>
<dbReference type="GeneCards" id="ICMT"/>
<dbReference type="HGNC" id="HGNC:5350">
    <property type="gene designation" value="ICMT"/>
</dbReference>
<dbReference type="HPA" id="ENSG00000116237">
    <property type="expression patterns" value="Low tissue specificity"/>
</dbReference>
<dbReference type="MIM" id="605851">
    <property type="type" value="gene"/>
</dbReference>
<dbReference type="neXtProt" id="NX_O60725"/>
<dbReference type="OpenTargets" id="ENSG00000116237"/>
<dbReference type="PharmGKB" id="PA29598"/>
<dbReference type="VEuPathDB" id="HostDB:ENSG00000116237"/>
<dbReference type="eggNOG" id="KOG2628">
    <property type="taxonomic scope" value="Eukaryota"/>
</dbReference>
<dbReference type="GeneTree" id="ENSGT00390000017394"/>
<dbReference type="HOGENOM" id="CLU_065200_0_1_1"/>
<dbReference type="InParanoid" id="O60725"/>
<dbReference type="OMA" id="IKREEAY"/>
<dbReference type="OrthoDB" id="422086at2759"/>
<dbReference type="PAN-GO" id="O60725">
    <property type="GO annotations" value="3 GO annotations based on evolutionary models"/>
</dbReference>
<dbReference type="PhylomeDB" id="O60725"/>
<dbReference type="TreeFam" id="TF313769"/>
<dbReference type="BRENDA" id="2.1.1.100">
    <property type="organism ID" value="2681"/>
</dbReference>
<dbReference type="PathwayCommons" id="O60725"/>
<dbReference type="Reactome" id="R-HSA-163841">
    <property type="pathway name" value="Gamma carboxylation, hypusinylation, hydroxylation, and arylsulfatase activation"/>
</dbReference>
<dbReference type="Reactome" id="R-HSA-9648002">
    <property type="pathway name" value="RAS processing"/>
</dbReference>
<dbReference type="SABIO-RK" id="O60725"/>
<dbReference type="SignaLink" id="O60725"/>
<dbReference type="BioGRID-ORCS" id="23463">
    <property type="hits" value="80 hits in 1166 CRISPR screens"/>
</dbReference>
<dbReference type="ChiTaRS" id="ICMT">
    <property type="organism name" value="human"/>
</dbReference>
<dbReference type="GeneWiki" id="ICMT"/>
<dbReference type="GenomeRNAi" id="23463"/>
<dbReference type="Pharos" id="O60725">
    <property type="development level" value="Tchem"/>
</dbReference>
<dbReference type="PRO" id="PR:O60725"/>
<dbReference type="Proteomes" id="UP000005640">
    <property type="component" value="Chromosome 1"/>
</dbReference>
<dbReference type="RNAct" id="O60725">
    <property type="molecule type" value="protein"/>
</dbReference>
<dbReference type="Bgee" id="ENSG00000116237">
    <property type="expression patterns" value="Expressed in diaphragm and 213 other cell types or tissues"/>
</dbReference>
<dbReference type="ExpressionAtlas" id="O60725">
    <property type="expression patterns" value="baseline and differential"/>
</dbReference>
<dbReference type="GO" id="GO:0005783">
    <property type="term" value="C:endoplasmic reticulum"/>
    <property type="evidence" value="ECO:0000314"/>
    <property type="project" value="MGI"/>
</dbReference>
<dbReference type="GO" id="GO:0005789">
    <property type="term" value="C:endoplasmic reticulum membrane"/>
    <property type="evidence" value="ECO:0000304"/>
    <property type="project" value="Reactome"/>
</dbReference>
<dbReference type="GO" id="GO:0016020">
    <property type="term" value="C:membrane"/>
    <property type="evidence" value="ECO:0000304"/>
    <property type="project" value="ProtInc"/>
</dbReference>
<dbReference type="GO" id="GO:0003880">
    <property type="term" value="F:protein C-terminal carboxyl O-methyltransferase activity"/>
    <property type="evidence" value="ECO:0000304"/>
    <property type="project" value="ProtInc"/>
</dbReference>
<dbReference type="GO" id="GO:0004671">
    <property type="term" value="F:protein C-terminal S-isoprenylcysteine carboxyl O-methyltransferase activity"/>
    <property type="evidence" value="ECO:0000314"/>
    <property type="project" value="FlyBase"/>
</dbReference>
<dbReference type="GO" id="GO:0006481">
    <property type="term" value="P:C-terminal protein methylation"/>
    <property type="evidence" value="ECO:0000304"/>
    <property type="project" value="ProtInc"/>
</dbReference>
<dbReference type="GO" id="GO:0036211">
    <property type="term" value="P:protein modification process"/>
    <property type="evidence" value="ECO:0000304"/>
    <property type="project" value="ProtInc"/>
</dbReference>
<dbReference type="GO" id="GO:0006612">
    <property type="term" value="P:protein targeting to membrane"/>
    <property type="evidence" value="ECO:0000304"/>
    <property type="project" value="ProtInc"/>
</dbReference>
<dbReference type="GO" id="GO:0046498">
    <property type="term" value="P:S-adenosylhomocysteine metabolic process"/>
    <property type="evidence" value="ECO:0007669"/>
    <property type="project" value="Ensembl"/>
</dbReference>
<dbReference type="GO" id="GO:0046499">
    <property type="term" value="P:S-adenosylmethioninamine metabolic process"/>
    <property type="evidence" value="ECO:0007669"/>
    <property type="project" value="Ensembl"/>
</dbReference>
<dbReference type="FunFam" id="1.20.120.1630:FF:000007">
    <property type="entry name" value="Protein-S-isoprenylcysteine O-methyltransferase"/>
    <property type="match status" value="1"/>
</dbReference>
<dbReference type="Gene3D" id="1.20.120.1630">
    <property type="match status" value="1"/>
</dbReference>
<dbReference type="InterPro" id="IPR007269">
    <property type="entry name" value="ICMT_MeTrfase"/>
</dbReference>
<dbReference type="InterPro" id="IPR025770">
    <property type="entry name" value="PPMT_MeTrfase"/>
</dbReference>
<dbReference type="PANTHER" id="PTHR12714">
    <property type="entry name" value="PROTEIN-S ISOPRENYLCYSTEINE O-METHYLTRANSFERASE"/>
    <property type="match status" value="1"/>
</dbReference>
<dbReference type="PANTHER" id="PTHR12714:SF9">
    <property type="entry name" value="PROTEIN-S-ISOPRENYLCYSTEINE O-METHYLTRANSFERASE"/>
    <property type="match status" value="1"/>
</dbReference>
<dbReference type="Pfam" id="PF04140">
    <property type="entry name" value="ICMT"/>
    <property type="match status" value="1"/>
</dbReference>
<dbReference type="PROSITE" id="PS51564">
    <property type="entry name" value="SAM_ICMT"/>
    <property type="match status" value="1"/>
</dbReference>
<gene>
    <name type="primary">ICMT</name>
    <name type="synonym">PCCMT</name>
</gene>
<proteinExistence type="evidence at protein level"/>